<reference key="1">
    <citation type="journal article" date="2004" name="Proc. Natl. Acad. Sci. U.S.A.">
        <title>A family of Acrp30/adiponectin structural and functional paralogs.</title>
        <authorList>
            <person name="Wong G.W."/>
            <person name="Wang J."/>
            <person name="Hug C."/>
            <person name="Tsao T.S."/>
            <person name="Lodish H.F."/>
        </authorList>
    </citation>
    <scope>NUCLEOTIDE SEQUENCE [MRNA]</scope>
    <source>
        <strain>C57BL/6J</strain>
        <tissue>Adipose tissue</tissue>
    </source>
</reference>
<reference key="2">
    <citation type="submission" date="1999-10" db="EMBL/GenBank/DDBJ databases">
        <title>Mus musculus putative secreted protein.</title>
        <authorList>
            <person name="Sheppard P."/>
            <person name="Deisher T."/>
            <person name="Grant F."/>
            <person name="Chen L."/>
            <person name="Haldeman B."/>
            <person name="McKnight G."/>
            <person name="Whitmore T."/>
            <person name="O'Hara P."/>
        </authorList>
    </citation>
    <scope>NUCLEOTIDE SEQUENCE [MRNA]</scope>
</reference>
<reference key="3">
    <citation type="journal article" date="2005" name="Science">
        <title>The transcriptional landscape of the mammalian genome.</title>
        <authorList>
            <person name="Carninci P."/>
            <person name="Kasukawa T."/>
            <person name="Katayama S."/>
            <person name="Gough J."/>
            <person name="Frith M.C."/>
            <person name="Maeda N."/>
            <person name="Oyama R."/>
            <person name="Ravasi T."/>
            <person name="Lenhard B."/>
            <person name="Wells C."/>
            <person name="Kodzius R."/>
            <person name="Shimokawa K."/>
            <person name="Bajic V.B."/>
            <person name="Brenner S.E."/>
            <person name="Batalov S."/>
            <person name="Forrest A.R."/>
            <person name="Zavolan M."/>
            <person name="Davis M.J."/>
            <person name="Wilming L.G."/>
            <person name="Aidinis V."/>
            <person name="Allen J.E."/>
            <person name="Ambesi-Impiombato A."/>
            <person name="Apweiler R."/>
            <person name="Aturaliya R.N."/>
            <person name="Bailey T.L."/>
            <person name="Bansal M."/>
            <person name="Baxter L."/>
            <person name="Beisel K.W."/>
            <person name="Bersano T."/>
            <person name="Bono H."/>
            <person name="Chalk A.M."/>
            <person name="Chiu K.P."/>
            <person name="Choudhary V."/>
            <person name="Christoffels A."/>
            <person name="Clutterbuck D.R."/>
            <person name="Crowe M.L."/>
            <person name="Dalla E."/>
            <person name="Dalrymple B.P."/>
            <person name="de Bono B."/>
            <person name="Della Gatta G."/>
            <person name="di Bernardo D."/>
            <person name="Down T."/>
            <person name="Engstrom P."/>
            <person name="Fagiolini M."/>
            <person name="Faulkner G."/>
            <person name="Fletcher C.F."/>
            <person name="Fukushima T."/>
            <person name="Furuno M."/>
            <person name="Futaki S."/>
            <person name="Gariboldi M."/>
            <person name="Georgii-Hemming P."/>
            <person name="Gingeras T.R."/>
            <person name="Gojobori T."/>
            <person name="Green R.E."/>
            <person name="Gustincich S."/>
            <person name="Harbers M."/>
            <person name="Hayashi Y."/>
            <person name="Hensch T.K."/>
            <person name="Hirokawa N."/>
            <person name="Hill D."/>
            <person name="Huminiecki L."/>
            <person name="Iacono M."/>
            <person name="Ikeo K."/>
            <person name="Iwama A."/>
            <person name="Ishikawa T."/>
            <person name="Jakt M."/>
            <person name="Kanapin A."/>
            <person name="Katoh M."/>
            <person name="Kawasawa Y."/>
            <person name="Kelso J."/>
            <person name="Kitamura H."/>
            <person name="Kitano H."/>
            <person name="Kollias G."/>
            <person name="Krishnan S.P."/>
            <person name="Kruger A."/>
            <person name="Kummerfeld S.K."/>
            <person name="Kurochkin I.V."/>
            <person name="Lareau L.F."/>
            <person name="Lazarevic D."/>
            <person name="Lipovich L."/>
            <person name="Liu J."/>
            <person name="Liuni S."/>
            <person name="McWilliam S."/>
            <person name="Madan Babu M."/>
            <person name="Madera M."/>
            <person name="Marchionni L."/>
            <person name="Matsuda H."/>
            <person name="Matsuzawa S."/>
            <person name="Miki H."/>
            <person name="Mignone F."/>
            <person name="Miyake S."/>
            <person name="Morris K."/>
            <person name="Mottagui-Tabar S."/>
            <person name="Mulder N."/>
            <person name="Nakano N."/>
            <person name="Nakauchi H."/>
            <person name="Ng P."/>
            <person name="Nilsson R."/>
            <person name="Nishiguchi S."/>
            <person name="Nishikawa S."/>
            <person name="Nori F."/>
            <person name="Ohara O."/>
            <person name="Okazaki Y."/>
            <person name="Orlando V."/>
            <person name="Pang K.C."/>
            <person name="Pavan W.J."/>
            <person name="Pavesi G."/>
            <person name="Pesole G."/>
            <person name="Petrovsky N."/>
            <person name="Piazza S."/>
            <person name="Reed J."/>
            <person name="Reid J.F."/>
            <person name="Ring B.Z."/>
            <person name="Ringwald M."/>
            <person name="Rost B."/>
            <person name="Ruan Y."/>
            <person name="Salzberg S.L."/>
            <person name="Sandelin A."/>
            <person name="Schneider C."/>
            <person name="Schoenbach C."/>
            <person name="Sekiguchi K."/>
            <person name="Semple C.A."/>
            <person name="Seno S."/>
            <person name="Sessa L."/>
            <person name="Sheng Y."/>
            <person name="Shibata Y."/>
            <person name="Shimada H."/>
            <person name="Shimada K."/>
            <person name="Silva D."/>
            <person name="Sinclair B."/>
            <person name="Sperling S."/>
            <person name="Stupka E."/>
            <person name="Sugiura K."/>
            <person name="Sultana R."/>
            <person name="Takenaka Y."/>
            <person name="Taki K."/>
            <person name="Tammoja K."/>
            <person name="Tan S.L."/>
            <person name="Tang S."/>
            <person name="Taylor M.S."/>
            <person name="Tegner J."/>
            <person name="Teichmann S.A."/>
            <person name="Ueda H.R."/>
            <person name="van Nimwegen E."/>
            <person name="Verardo R."/>
            <person name="Wei C.L."/>
            <person name="Yagi K."/>
            <person name="Yamanishi H."/>
            <person name="Zabarovsky E."/>
            <person name="Zhu S."/>
            <person name="Zimmer A."/>
            <person name="Hide W."/>
            <person name="Bult C."/>
            <person name="Grimmond S.M."/>
            <person name="Teasdale R.D."/>
            <person name="Liu E.T."/>
            <person name="Brusic V."/>
            <person name="Quackenbush J."/>
            <person name="Wahlestedt C."/>
            <person name="Mattick J.S."/>
            <person name="Hume D.A."/>
            <person name="Kai C."/>
            <person name="Sasaki D."/>
            <person name="Tomaru Y."/>
            <person name="Fukuda S."/>
            <person name="Kanamori-Katayama M."/>
            <person name="Suzuki M."/>
            <person name="Aoki J."/>
            <person name="Arakawa T."/>
            <person name="Iida J."/>
            <person name="Imamura K."/>
            <person name="Itoh M."/>
            <person name="Kato T."/>
            <person name="Kawaji H."/>
            <person name="Kawagashira N."/>
            <person name="Kawashima T."/>
            <person name="Kojima M."/>
            <person name="Kondo S."/>
            <person name="Konno H."/>
            <person name="Nakano K."/>
            <person name="Ninomiya N."/>
            <person name="Nishio T."/>
            <person name="Okada M."/>
            <person name="Plessy C."/>
            <person name="Shibata K."/>
            <person name="Shiraki T."/>
            <person name="Suzuki S."/>
            <person name="Tagami M."/>
            <person name="Waki K."/>
            <person name="Watahiki A."/>
            <person name="Okamura-Oho Y."/>
            <person name="Suzuki H."/>
            <person name="Kawai J."/>
            <person name="Hayashizaki Y."/>
        </authorList>
    </citation>
    <scope>NUCLEOTIDE SEQUENCE [LARGE SCALE MRNA]</scope>
    <source>
        <strain>C57BL/6J</strain>
        <tissue>Mammary gland</tissue>
        <tissue>Placenta</tissue>
    </source>
</reference>
<reference key="4">
    <citation type="journal article" date="2009" name="PLoS Biol.">
        <title>Lineage-specific biology revealed by a finished genome assembly of the mouse.</title>
        <authorList>
            <person name="Church D.M."/>
            <person name="Goodstadt L."/>
            <person name="Hillier L.W."/>
            <person name="Zody M.C."/>
            <person name="Goldstein S."/>
            <person name="She X."/>
            <person name="Bult C.J."/>
            <person name="Agarwala R."/>
            <person name="Cherry J.L."/>
            <person name="DiCuccio M."/>
            <person name="Hlavina W."/>
            <person name="Kapustin Y."/>
            <person name="Meric P."/>
            <person name="Maglott D."/>
            <person name="Birtle Z."/>
            <person name="Marques A.C."/>
            <person name="Graves T."/>
            <person name="Zhou S."/>
            <person name="Teague B."/>
            <person name="Potamousis K."/>
            <person name="Churas C."/>
            <person name="Place M."/>
            <person name="Herschleb J."/>
            <person name="Runnheim R."/>
            <person name="Forrest D."/>
            <person name="Amos-Landgraf J."/>
            <person name="Schwartz D.C."/>
            <person name="Cheng Z."/>
            <person name="Lindblad-Toh K."/>
            <person name="Eichler E.E."/>
            <person name="Ponting C.P."/>
        </authorList>
    </citation>
    <scope>NUCLEOTIDE SEQUENCE [LARGE SCALE GENOMIC DNA]</scope>
    <source>
        <strain>C57BL/6J</strain>
    </source>
</reference>
<reference key="5">
    <citation type="journal article" date="2004" name="Genome Res.">
        <title>The status, quality, and expansion of the NIH full-length cDNA project: the Mammalian Gene Collection (MGC).</title>
        <authorList>
            <consortium name="The MGC Project Team"/>
        </authorList>
    </citation>
    <scope>NUCLEOTIDE SEQUENCE [LARGE SCALE MRNA]</scope>
    <source>
        <strain>Czech II</strain>
        <tissue>Mammary tumor</tissue>
    </source>
</reference>
<organism>
    <name type="scientific">Mus musculus</name>
    <name type="common">Mouse</name>
    <dbReference type="NCBI Taxonomy" id="10090"/>
    <lineage>
        <taxon>Eukaryota</taxon>
        <taxon>Metazoa</taxon>
        <taxon>Chordata</taxon>
        <taxon>Craniata</taxon>
        <taxon>Vertebrata</taxon>
        <taxon>Euteleostomi</taxon>
        <taxon>Mammalia</taxon>
        <taxon>Eutheria</taxon>
        <taxon>Euarchontoglires</taxon>
        <taxon>Glires</taxon>
        <taxon>Rodentia</taxon>
        <taxon>Myomorpha</taxon>
        <taxon>Muroidea</taxon>
        <taxon>Muridae</taxon>
        <taxon>Murinae</taxon>
        <taxon>Mus</taxon>
        <taxon>Mus</taxon>
    </lineage>
</organism>
<accession>Q9QXP7</accession>
<accession>Q80VI9</accession>
<name>C1QT1_MOUSE</name>
<protein>
    <recommendedName>
        <fullName>Complement C1q tumor necrosis factor-related protein 1</fullName>
    </recommendedName>
    <alternativeName>
        <fullName>Putative secreted protein ZSIG37</fullName>
    </alternativeName>
</protein>
<keyword id="KW-0176">Collagen</keyword>
<keyword id="KW-0325">Glycoprotein</keyword>
<keyword id="KW-1185">Reference proteome</keyword>
<keyword id="KW-0964">Secreted</keyword>
<keyword id="KW-0732">Signal</keyword>
<gene>
    <name type="primary">C1qtnf1</name>
    <name type="synonym">Zsig37</name>
</gene>
<dbReference type="EMBL" id="DQ002394">
    <property type="protein sequence ID" value="AAY21926.1"/>
    <property type="molecule type" value="mRNA"/>
</dbReference>
<dbReference type="EMBL" id="AF192499">
    <property type="protein sequence ID" value="AAF06664.1"/>
    <property type="molecule type" value="mRNA"/>
</dbReference>
<dbReference type="EMBL" id="AK005484">
    <property type="protein sequence ID" value="BAB24070.1"/>
    <property type="molecule type" value="mRNA"/>
</dbReference>
<dbReference type="EMBL" id="AK145104">
    <property type="protein sequence ID" value="BAE26237.1"/>
    <property type="molecule type" value="mRNA"/>
</dbReference>
<dbReference type="EMBL" id="AL591075">
    <property type="status" value="NOT_ANNOTATED_CDS"/>
    <property type="molecule type" value="Genomic_DNA"/>
</dbReference>
<dbReference type="EMBL" id="BC049894">
    <property type="protein sequence ID" value="AAH49894.1"/>
    <property type="molecule type" value="mRNA"/>
</dbReference>
<dbReference type="CCDS" id="CCDS25703.1"/>
<dbReference type="RefSeq" id="NP_001191058.1">
    <property type="nucleotide sequence ID" value="NM_001204129.1"/>
</dbReference>
<dbReference type="RefSeq" id="NP_001191059.1">
    <property type="nucleotide sequence ID" value="NM_001204130.1"/>
</dbReference>
<dbReference type="RefSeq" id="NP_064343.1">
    <property type="nucleotide sequence ID" value="NM_019959.3"/>
</dbReference>
<dbReference type="RefSeq" id="XP_006533884.1">
    <property type="nucleotide sequence ID" value="XM_006533821.4"/>
</dbReference>
<dbReference type="RefSeq" id="XP_006533885.1">
    <property type="nucleotide sequence ID" value="XM_006533822.5"/>
</dbReference>
<dbReference type="SMR" id="Q9QXP7"/>
<dbReference type="FunCoup" id="Q9QXP7">
    <property type="interactions" value="396"/>
</dbReference>
<dbReference type="IntAct" id="Q9QXP7">
    <property type="interactions" value="1"/>
</dbReference>
<dbReference type="STRING" id="10090.ENSMUSP00000017590"/>
<dbReference type="GlyCosmos" id="Q9QXP7">
    <property type="glycosylation" value="1 site, No reported glycans"/>
</dbReference>
<dbReference type="GlyGen" id="Q9QXP7">
    <property type="glycosylation" value="1 site"/>
</dbReference>
<dbReference type="PhosphoSitePlus" id="Q9QXP7"/>
<dbReference type="PaxDb" id="10090-ENSMUSP00000017590"/>
<dbReference type="PeptideAtlas" id="Q9QXP7"/>
<dbReference type="ProteomicsDB" id="265260"/>
<dbReference type="Antibodypedia" id="19749">
    <property type="antibodies" value="285 antibodies from 35 providers"/>
</dbReference>
<dbReference type="DNASU" id="56745"/>
<dbReference type="Ensembl" id="ENSMUST00000017590.9">
    <property type="protein sequence ID" value="ENSMUSP00000017590.3"/>
    <property type="gene ID" value="ENSMUSG00000017446.15"/>
</dbReference>
<dbReference type="Ensembl" id="ENSMUST00000106286.3">
    <property type="protein sequence ID" value="ENSMUSP00000101893.2"/>
    <property type="gene ID" value="ENSMUSG00000017446.15"/>
</dbReference>
<dbReference type="GeneID" id="56745"/>
<dbReference type="KEGG" id="mmu:56745"/>
<dbReference type="UCSC" id="uc007mpg.2">
    <property type="organism name" value="mouse"/>
</dbReference>
<dbReference type="AGR" id="MGI:1919254"/>
<dbReference type="CTD" id="114897"/>
<dbReference type="MGI" id="MGI:1919254">
    <property type="gene designation" value="C1qtnf1"/>
</dbReference>
<dbReference type="VEuPathDB" id="HostDB:ENSMUSG00000017446"/>
<dbReference type="eggNOG" id="ENOG502QT5D">
    <property type="taxonomic scope" value="Eukaryota"/>
</dbReference>
<dbReference type="GeneTree" id="ENSGT00940000161333"/>
<dbReference type="HOGENOM" id="CLU_001074_3_0_1"/>
<dbReference type="InParanoid" id="Q9QXP7"/>
<dbReference type="OMA" id="VWVRLFR"/>
<dbReference type="OrthoDB" id="6138508at2759"/>
<dbReference type="PhylomeDB" id="Q9QXP7"/>
<dbReference type="TreeFam" id="TF329591"/>
<dbReference type="BioGRID-ORCS" id="56745">
    <property type="hits" value="2 hits in 77 CRISPR screens"/>
</dbReference>
<dbReference type="ChiTaRS" id="C1qtnf1">
    <property type="organism name" value="mouse"/>
</dbReference>
<dbReference type="PRO" id="PR:Q9QXP7"/>
<dbReference type="Proteomes" id="UP000000589">
    <property type="component" value="Chromosome 11"/>
</dbReference>
<dbReference type="RNAct" id="Q9QXP7">
    <property type="molecule type" value="protein"/>
</dbReference>
<dbReference type="Bgee" id="ENSMUSG00000017446">
    <property type="expression patterns" value="Expressed in decidua and 145 other cell types or tissues"/>
</dbReference>
<dbReference type="ExpressionAtlas" id="Q9QXP7">
    <property type="expression patterns" value="baseline and differential"/>
</dbReference>
<dbReference type="GO" id="GO:0005581">
    <property type="term" value="C:collagen trimer"/>
    <property type="evidence" value="ECO:0007669"/>
    <property type="project" value="UniProtKB-KW"/>
</dbReference>
<dbReference type="GO" id="GO:0005615">
    <property type="term" value="C:extracellular space"/>
    <property type="evidence" value="ECO:0000314"/>
    <property type="project" value="MGI"/>
</dbReference>
<dbReference type="GO" id="GO:0005886">
    <property type="term" value="C:plasma membrane"/>
    <property type="evidence" value="ECO:0007669"/>
    <property type="project" value="Ensembl"/>
</dbReference>
<dbReference type="GO" id="GO:0005518">
    <property type="term" value="F:collagen binding"/>
    <property type="evidence" value="ECO:0007669"/>
    <property type="project" value="Ensembl"/>
</dbReference>
<dbReference type="GO" id="GO:0042802">
    <property type="term" value="F:identical protein binding"/>
    <property type="evidence" value="ECO:0000353"/>
    <property type="project" value="MGI"/>
</dbReference>
<dbReference type="GO" id="GO:0090331">
    <property type="term" value="P:negative regulation of platelet aggregation"/>
    <property type="evidence" value="ECO:0007669"/>
    <property type="project" value="Ensembl"/>
</dbReference>
<dbReference type="GO" id="GO:2000860">
    <property type="term" value="P:positive regulation of aldosterone secretion"/>
    <property type="evidence" value="ECO:0007669"/>
    <property type="project" value="Ensembl"/>
</dbReference>
<dbReference type="GO" id="GO:0007204">
    <property type="term" value="P:positive regulation of cytosolic calcium ion concentration"/>
    <property type="evidence" value="ECO:0007669"/>
    <property type="project" value="Ensembl"/>
</dbReference>
<dbReference type="GO" id="GO:0010628">
    <property type="term" value="P:positive regulation of gene expression"/>
    <property type="evidence" value="ECO:0007669"/>
    <property type="project" value="Ensembl"/>
</dbReference>
<dbReference type="GO" id="GO:0043410">
    <property type="term" value="P:positive regulation of MAPK cascade"/>
    <property type="evidence" value="ECO:0000314"/>
    <property type="project" value="MGI"/>
</dbReference>
<dbReference type="GO" id="GO:0051897">
    <property type="term" value="P:positive regulation of phosphatidylinositol 3-kinase/protein kinase B signal transduction"/>
    <property type="evidence" value="ECO:0000314"/>
    <property type="project" value="MGI"/>
</dbReference>
<dbReference type="GO" id="GO:0010906">
    <property type="term" value="P:regulation of glucose metabolic process"/>
    <property type="evidence" value="ECO:0000314"/>
    <property type="project" value="MGI"/>
</dbReference>
<dbReference type="FunFam" id="2.60.120.40:FF:000029">
    <property type="entry name" value="Complement C1q tumor necrosis factor-related protein 1"/>
    <property type="match status" value="1"/>
</dbReference>
<dbReference type="Gene3D" id="2.60.120.40">
    <property type="match status" value="1"/>
</dbReference>
<dbReference type="InterPro" id="IPR001073">
    <property type="entry name" value="C1q_dom"/>
</dbReference>
<dbReference type="InterPro" id="IPR050822">
    <property type="entry name" value="Cerebellin_Synaptic_Org"/>
</dbReference>
<dbReference type="InterPro" id="IPR008160">
    <property type="entry name" value="Collagen"/>
</dbReference>
<dbReference type="InterPro" id="IPR008983">
    <property type="entry name" value="Tumour_necrosis_fac-like_dom"/>
</dbReference>
<dbReference type="PANTHER" id="PTHR22923">
    <property type="entry name" value="CEREBELLIN-RELATED"/>
    <property type="match status" value="1"/>
</dbReference>
<dbReference type="PANTHER" id="PTHR22923:SF63">
    <property type="entry name" value="COMPLEMENT C1Q TUMOR NECROSIS FACTOR-RELATED PROTEIN 1"/>
    <property type="match status" value="1"/>
</dbReference>
<dbReference type="Pfam" id="PF00386">
    <property type="entry name" value="C1q"/>
    <property type="match status" value="1"/>
</dbReference>
<dbReference type="Pfam" id="PF01391">
    <property type="entry name" value="Collagen"/>
    <property type="match status" value="1"/>
</dbReference>
<dbReference type="PRINTS" id="PR00007">
    <property type="entry name" value="COMPLEMNTC1Q"/>
</dbReference>
<dbReference type="SMART" id="SM00110">
    <property type="entry name" value="C1Q"/>
    <property type="match status" value="1"/>
</dbReference>
<dbReference type="SUPFAM" id="SSF49842">
    <property type="entry name" value="TNF-like"/>
    <property type="match status" value="1"/>
</dbReference>
<dbReference type="PROSITE" id="PS50871">
    <property type="entry name" value="C1Q"/>
    <property type="match status" value="1"/>
</dbReference>
<feature type="signal peptide" evidence="1">
    <location>
        <begin position="1"/>
        <end position="25"/>
    </location>
</feature>
<feature type="chain" id="PRO_0000320081" description="Complement C1q tumor necrosis factor-related protein 1">
    <location>
        <begin position="26"/>
        <end position="281"/>
    </location>
</feature>
<feature type="domain" description="Collagen-like">
    <location>
        <begin position="99"/>
        <end position="140"/>
    </location>
</feature>
<feature type="domain" description="C1q" evidence="2">
    <location>
        <begin position="141"/>
        <end position="281"/>
    </location>
</feature>
<feature type="region of interest" description="Disordered" evidence="3">
    <location>
        <begin position="35"/>
        <end position="68"/>
    </location>
</feature>
<feature type="region of interest" description="Disordered" evidence="3">
    <location>
        <begin position="107"/>
        <end position="136"/>
    </location>
</feature>
<feature type="compositionally biased region" description="Basic and acidic residues" evidence="3">
    <location>
        <begin position="51"/>
        <end position="66"/>
    </location>
</feature>
<feature type="glycosylation site" description="N-linked (GlcNAc...) asparagine" evidence="1">
    <location>
        <position position="93"/>
    </location>
</feature>
<feature type="sequence conflict" description="In Ref. 3; BAE26237 and 5; AAH49894." evidence="4" ref="3 5">
    <original>M</original>
    <variation>L</variation>
    <location>
        <position position="9"/>
    </location>
</feature>
<comment type="subcellular location">
    <subcellularLocation>
        <location evidence="4">Secreted</location>
    </subcellularLocation>
</comment>
<proteinExistence type="evidence at transcript level"/>
<evidence type="ECO:0000255" key="1"/>
<evidence type="ECO:0000255" key="2">
    <source>
        <dbReference type="PROSITE-ProRule" id="PRU00368"/>
    </source>
</evidence>
<evidence type="ECO:0000256" key="3">
    <source>
        <dbReference type="SAM" id="MobiDB-lite"/>
    </source>
</evidence>
<evidence type="ECO:0000305" key="4"/>
<sequence length="281" mass="32009">MGSCAQGFMLGCCLLLAITWGPILSLVPRVQEEQQEWEETEELPSPLDPVTRPEETREKYSPRQGEDLPTSRCYRCCDPSTPVYQTIPPPQINITILKGEKGDRGDRGLQGKYGKIGSTGPRGHVGPKGQKGSIGAPGNHCKSQYAAFSVGRKKALHSNDYFQPVVFDTEFVNLYKHFNMFTGKFYCYVPGIYFFSLNVHTWNQKETYLHIMKNEEEVVILYAQVSDRSIMQSQSLMMELREEDEVWVRLFKGERENAIFSDEFDTYITFSGYLVKPASEP</sequence>